<sequence>MKINTAEFIVSNSDAAKCPKDFLPEYAFIGRSNVGKSSLINMITNHKNLAKTSGKPGKTQLINHFKINNNWFLVDLPGYGYAKVSKKTKSIFQQFITDYFENREQLVCAFVLIDIRHEAQKIDIEFMSYMGESEIPFCIIFTKADKISKGKIDSHIAAYRKQMYANNWAEMPQYFVTSSTESIGKDELLTYIDEVNQEVFKNNSGFLNSI</sequence>
<accession>A5FIZ1</accession>
<keyword id="KW-0131">Cell cycle</keyword>
<keyword id="KW-0132">Cell division</keyword>
<keyword id="KW-0342">GTP-binding</keyword>
<keyword id="KW-0460">Magnesium</keyword>
<keyword id="KW-0479">Metal-binding</keyword>
<keyword id="KW-0547">Nucleotide-binding</keyword>
<keyword id="KW-0717">Septation</keyword>
<evidence type="ECO:0000255" key="1">
    <source>
        <dbReference type="HAMAP-Rule" id="MF_00321"/>
    </source>
</evidence>
<proteinExistence type="inferred from homology"/>
<comment type="function">
    <text evidence="1">Necessary for normal cell division and for the maintenance of normal septation.</text>
</comment>
<comment type="cofactor">
    <cofactor evidence="1">
        <name>Mg(2+)</name>
        <dbReference type="ChEBI" id="CHEBI:18420"/>
    </cofactor>
</comment>
<comment type="similarity">
    <text evidence="1">Belongs to the TRAFAC class TrmE-Era-EngA-EngB-Septin-like GTPase superfamily. EngB GTPase family.</text>
</comment>
<reference key="1">
    <citation type="journal article" date="2009" name="Appl. Environ. Microbiol.">
        <title>Novel features of the polysaccharide-digesting gliding bacterium Flavobacterium johnsoniae as revealed by genome sequence analysis.</title>
        <authorList>
            <person name="McBride M.J."/>
            <person name="Xie G."/>
            <person name="Martens E.C."/>
            <person name="Lapidus A."/>
            <person name="Henrissat B."/>
            <person name="Rhodes R.G."/>
            <person name="Goltsman E."/>
            <person name="Wang W."/>
            <person name="Xu J."/>
            <person name="Hunnicutt D.W."/>
            <person name="Staroscik A.M."/>
            <person name="Hoover T.R."/>
            <person name="Cheng Y.Q."/>
            <person name="Stein J.L."/>
        </authorList>
    </citation>
    <scope>NUCLEOTIDE SEQUENCE [LARGE SCALE GENOMIC DNA]</scope>
    <source>
        <strain>ATCC 17061 / DSM 2064 / JCM 8514 / BCRC 14874 / CCUG 350202 / NBRC 14942 / NCIMB 11054 / UW101</strain>
    </source>
</reference>
<gene>
    <name evidence="1" type="primary">engB</name>
    <name type="ordered locus">Fjoh_1800</name>
</gene>
<protein>
    <recommendedName>
        <fullName evidence="1">Probable GTP-binding protein EngB</fullName>
    </recommendedName>
</protein>
<name>ENGB_FLAJ1</name>
<feature type="chain" id="PRO_1000079171" description="Probable GTP-binding protein EngB">
    <location>
        <begin position="1"/>
        <end position="210"/>
    </location>
</feature>
<feature type="domain" description="EngB-type G" evidence="1">
    <location>
        <begin position="22"/>
        <end position="198"/>
    </location>
</feature>
<feature type="binding site" evidence="1">
    <location>
        <begin position="30"/>
        <end position="37"/>
    </location>
    <ligand>
        <name>GTP</name>
        <dbReference type="ChEBI" id="CHEBI:37565"/>
    </ligand>
</feature>
<feature type="binding site" evidence="1">
    <location>
        <position position="37"/>
    </location>
    <ligand>
        <name>Mg(2+)</name>
        <dbReference type="ChEBI" id="CHEBI:18420"/>
    </ligand>
</feature>
<feature type="binding site" evidence="1">
    <location>
        <begin position="57"/>
        <end position="61"/>
    </location>
    <ligand>
        <name>GTP</name>
        <dbReference type="ChEBI" id="CHEBI:37565"/>
    </ligand>
</feature>
<feature type="binding site" evidence="1">
    <location>
        <position position="59"/>
    </location>
    <ligand>
        <name>Mg(2+)</name>
        <dbReference type="ChEBI" id="CHEBI:18420"/>
    </ligand>
</feature>
<feature type="binding site" evidence="1">
    <location>
        <begin position="75"/>
        <end position="78"/>
    </location>
    <ligand>
        <name>GTP</name>
        <dbReference type="ChEBI" id="CHEBI:37565"/>
    </ligand>
</feature>
<feature type="binding site" evidence="1">
    <location>
        <begin position="142"/>
        <end position="145"/>
    </location>
    <ligand>
        <name>GTP</name>
        <dbReference type="ChEBI" id="CHEBI:37565"/>
    </ligand>
</feature>
<feature type="binding site" evidence="1">
    <location>
        <begin position="177"/>
        <end position="179"/>
    </location>
    <ligand>
        <name>GTP</name>
        <dbReference type="ChEBI" id="CHEBI:37565"/>
    </ligand>
</feature>
<organism>
    <name type="scientific">Flavobacterium johnsoniae (strain ATCC 17061 / DSM 2064 / JCM 8514 / BCRC 14874 / CCUG 350202 / NBRC 14942 / NCIMB 11054 / UW101)</name>
    <name type="common">Cytophaga johnsonae</name>
    <dbReference type="NCBI Taxonomy" id="376686"/>
    <lineage>
        <taxon>Bacteria</taxon>
        <taxon>Pseudomonadati</taxon>
        <taxon>Bacteroidota</taxon>
        <taxon>Flavobacteriia</taxon>
        <taxon>Flavobacteriales</taxon>
        <taxon>Flavobacteriaceae</taxon>
        <taxon>Flavobacterium</taxon>
    </lineage>
</organism>
<dbReference type="EMBL" id="CP000685">
    <property type="protein sequence ID" value="ABQ04832.1"/>
    <property type="molecule type" value="Genomic_DNA"/>
</dbReference>
<dbReference type="SMR" id="A5FIZ1"/>
<dbReference type="STRING" id="376686.Fjoh_1800"/>
<dbReference type="KEGG" id="fjo:Fjoh_1800"/>
<dbReference type="eggNOG" id="COG0218">
    <property type="taxonomic scope" value="Bacteria"/>
</dbReference>
<dbReference type="HOGENOM" id="CLU_033732_3_1_10"/>
<dbReference type="OrthoDB" id="9804921at2"/>
<dbReference type="Proteomes" id="UP000006694">
    <property type="component" value="Chromosome"/>
</dbReference>
<dbReference type="GO" id="GO:0005525">
    <property type="term" value="F:GTP binding"/>
    <property type="evidence" value="ECO:0007669"/>
    <property type="project" value="UniProtKB-UniRule"/>
</dbReference>
<dbReference type="GO" id="GO:0046872">
    <property type="term" value="F:metal ion binding"/>
    <property type="evidence" value="ECO:0007669"/>
    <property type="project" value="UniProtKB-KW"/>
</dbReference>
<dbReference type="GO" id="GO:0000917">
    <property type="term" value="P:division septum assembly"/>
    <property type="evidence" value="ECO:0007669"/>
    <property type="project" value="UniProtKB-KW"/>
</dbReference>
<dbReference type="CDD" id="cd01876">
    <property type="entry name" value="YihA_EngB"/>
    <property type="match status" value="1"/>
</dbReference>
<dbReference type="FunFam" id="3.40.50.300:FF:000098">
    <property type="entry name" value="Probable GTP-binding protein EngB"/>
    <property type="match status" value="1"/>
</dbReference>
<dbReference type="Gene3D" id="3.40.50.300">
    <property type="entry name" value="P-loop containing nucleotide triphosphate hydrolases"/>
    <property type="match status" value="1"/>
</dbReference>
<dbReference type="HAMAP" id="MF_00321">
    <property type="entry name" value="GTPase_EngB"/>
    <property type="match status" value="1"/>
</dbReference>
<dbReference type="InterPro" id="IPR030393">
    <property type="entry name" value="G_ENGB_dom"/>
</dbReference>
<dbReference type="InterPro" id="IPR006073">
    <property type="entry name" value="GTP-bd"/>
</dbReference>
<dbReference type="InterPro" id="IPR019987">
    <property type="entry name" value="GTP-bd_ribosome_bio_YsxC"/>
</dbReference>
<dbReference type="InterPro" id="IPR027417">
    <property type="entry name" value="P-loop_NTPase"/>
</dbReference>
<dbReference type="NCBIfam" id="TIGR03598">
    <property type="entry name" value="GTPase_YsxC"/>
    <property type="match status" value="1"/>
</dbReference>
<dbReference type="PANTHER" id="PTHR11649:SF13">
    <property type="entry name" value="ENGB-TYPE G DOMAIN-CONTAINING PROTEIN"/>
    <property type="match status" value="1"/>
</dbReference>
<dbReference type="PANTHER" id="PTHR11649">
    <property type="entry name" value="MSS1/TRME-RELATED GTP-BINDING PROTEIN"/>
    <property type="match status" value="1"/>
</dbReference>
<dbReference type="Pfam" id="PF01926">
    <property type="entry name" value="MMR_HSR1"/>
    <property type="match status" value="1"/>
</dbReference>
<dbReference type="SUPFAM" id="SSF52540">
    <property type="entry name" value="P-loop containing nucleoside triphosphate hydrolases"/>
    <property type="match status" value="1"/>
</dbReference>
<dbReference type="PROSITE" id="PS51706">
    <property type="entry name" value="G_ENGB"/>
    <property type="match status" value="1"/>
</dbReference>